<organism>
    <name type="scientific">Enterobacter sp. (strain 638)</name>
    <dbReference type="NCBI Taxonomy" id="399742"/>
    <lineage>
        <taxon>Bacteria</taxon>
        <taxon>Pseudomonadati</taxon>
        <taxon>Pseudomonadota</taxon>
        <taxon>Gammaproteobacteria</taxon>
        <taxon>Enterobacterales</taxon>
        <taxon>Enterobacteriaceae</taxon>
        <taxon>Enterobacter</taxon>
    </lineage>
</organism>
<evidence type="ECO:0000255" key="1">
    <source>
        <dbReference type="HAMAP-Rule" id="MF_01082"/>
    </source>
</evidence>
<gene>
    <name evidence="1" type="primary">truD</name>
    <name type="ordered locus">Ent638_3216</name>
</gene>
<name>TRUD_ENT38</name>
<reference key="1">
    <citation type="journal article" date="2010" name="PLoS Genet.">
        <title>Genome sequence of the plant growth promoting endophytic bacterium Enterobacter sp. 638.</title>
        <authorList>
            <person name="Taghavi S."/>
            <person name="van der Lelie D."/>
            <person name="Hoffman A."/>
            <person name="Zhang Y.B."/>
            <person name="Walla M.D."/>
            <person name="Vangronsveld J."/>
            <person name="Newman L."/>
            <person name="Monchy S."/>
        </authorList>
    </citation>
    <scope>NUCLEOTIDE SEQUENCE [LARGE SCALE GENOMIC DNA]</scope>
    <source>
        <strain>638</strain>
    </source>
</reference>
<sequence length="349" mass="38648">MTAFENLTWLHGKPQGNGLLKANPEDFVVVEDLGFEPDGEGEHILVRILKNGCNTRFVADALAKFLKIHAREVSFAGQKDKHAVTEQWLCARVPGNAMPDLSQFELEGCKVLEYARHKRKLRLGALQGNAFTLILRDVTDRDDVEKRLAAIAEQGVPNYFGAQRFGIGGSNLLGALRWAQSDAPVRDRNKRSFWLSAARSALFNQIVSERLKKPDANQVVVGDALQLAGRGSWFVATAEEITDVQTRVDNKTLMITAAMPGSGEWGTQADALAAEQAAIADAPELQSLLMREKVEAARRAMLLYPQKLSWNWWDDVTVELRFWLPAGSFATSVVRELINTSGDYANIAE</sequence>
<dbReference type="EC" id="5.4.99.27" evidence="1"/>
<dbReference type="EMBL" id="CP000653">
    <property type="protein sequence ID" value="ABP61880.1"/>
    <property type="molecule type" value="Genomic_DNA"/>
</dbReference>
<dbReference type="RefSeq" id="WP_015960209.1">
    <property type="nucleotide sequence ID" value="NC_009436.1"/>
</dbReference>
<dbReference type="SMR" id="A4WDV0"/>
<dbReference type="STRING" id="399742.Ent638_3216"/>
<dbReference type="KEGG" id="ent:Ent638_3216"/>
<dbReference type="eggNOG" id="COG0585">
    <property type="taxonomic scope" value="Bacteria"/>
</dbReference>
<dbReference type="HOGENOM" id="CLU_005281_4_0_6"/>
<dbReference type="OrthoDB" id="1550679at2"/>
<dbReference type="Proteomes" id="UP000000230">
    <property type="component" value="Chromosome"/>
</dbReference>
<dbReference type="GO" id="GO:0005829">
    <property type="term" value="C:cytosol"/>
    <property type="evidence" value="ECO:0007669"/>
    <property type="project" value="TreeGrafter"/>
</dbReference>
<dbReference type="GO" id="GO:0003723">
    <property type="term" value="F:RNA binding"/>
    <property type="evidence" value="ECO:0007669"/>
    <property type="project" value="InterPro"/>
</dbReference>
<dbReference type="GO" id="GO:0160150">
    <property type="term" value="F:tRNA pseudouridine(13) synthase activity"/>
    <property type="evidence" value="ECO:0007669"/>
    <property type="project" value="UniProtKB-EC"/>
</dbReference>
<dbReference type="GO" id="GO:0031119">
    <property type="term" value="P:tRNA pseudouridine synthesis"/>
    <property type="evidence" value="ECO:0007669"/>
    <property type="project" value="UniProtKB-UniRule"/>
</dbReference>
<dbReference type="CDD" id="cd02575">
    <property type="entry name" value="PseudoU_synth_EcTruD"/>
    <property type="match status" value="1"/>
</dbReference>
<dbReference type="FunFam" id="3.30.2340.10:FF:000001">
    <property type="entry name" value="tRNA pseudouridine synthase D"/>
    <property type="match status" value="1"/>
</dbReference>
<dbReference type="FunFam" id="3.30.2350.20:FF:000001">
    <property type="entry name" value="tRNA pseudouridine synthase D"/>
    <property type="match status" value="1"/>
</dbReference>
<dbReference type="Gene3D" id="3.30.2350.20">
    <property type="entry name" value="TruD, catalytic domain"/>
    <property type="match status" value="1"/>
</dbReference>
<dbReference type="Gene3D" id="3.30.2340.10">
    <property type="entry name" value="TruD, insertion domain"/>
    <property type="match status" value="1"/>
</dbReference>
<dbReference type="HAMAP" id="MF_01082">
    <property type="entry name" value="TruD"/>
    <property type="match status" value="1"/>
</dbReference>
<dbReference type="InterPro" id="IPR020103">
    <property type="entry name" value="PsdUridine_synth_cat_dom_sf"/>
</dbReference>
<dbReference type="InterPro" id="IPR001656">
    <property type="entry name" value="PsdUridine_synth_TruD"/>
</dbReference>
<dbReference type="InterPro" id="IPR020119">
    <property type="entry name" value="PsdUridine_synth_TruD_CS"/>
</dbReference>
<dbReference type="InterPro" id="IPR011760">
    <property type="entry name" value="PsdUridine_synth_TruD_insert"/>
</dbReference>
<dbReference type="InterPro" id="IPR042214">
    <property type="entry name" value="TruD_catalytic"/>
</dbReference>
<dbReference type="InterPro" id="IPR043165">
    <property type="entry name" value="TruD_insert_sf"/>
</dbReference>
<dbReference type="InterPro" id="IPR050170">
    <property type="entry name" value="TruD_pseudoU_synthase"/>
</dbReference>
<dbReference type="NCBIfam" id="NF002155">
    <property type="entry name" value="PRK00984.1-4"/>
    <property type="match status" value="1"/>
</dbReference>
<dbReference type="NCBIfam" id="TIGR00094">
    <property type="entry name" value="tRNA_TruD_broad"/>
    <property type="match status" value="1"/>
</dbReference>
<dbReference type="PANTHER" id="PTHR47811">
    <property type="entry name" value="TRNA PSEUDOURIDINE SYNTHASE D"/>
    <property type="match status" value="1"/>
</dbReference>
<dbReference type="PANTHER" id="PTHR47811:SF1">
    <property type="entry name" value="TRNA PSEUDOURIDINE SYNTHASE D"/>
    <property type="match status" value="1"/>
</dbReference>
<dbReference type="Pfam" id="PF01142">
    <property type="entry name" value="TruD"/>
    <property type="match status" value="2"/>
</dbReference>
<dbReference type="SUPFAM" id="SSF55120">
    <property type="entry name" value="Pseudouridine synthase"/>
    <property type="match status" value="1"/>
</dbReference>
<dbReference type="PROSITE" id="PS50984">
    <property type="entry name" value="TRUD"/>
    <property type="match status" value="1"/>
</dbReference>
<dbReference type="PROSITE" id="PS01268">
    <property type="entry name" value="UPF0024"/>
    <property type="match status" value="1"/>
</dbReference>
<protein>
    <recommendedName>
        <fullName evidence="1">tRNA pseudouridine synthase D</fullName>
        <ecNumber evidence="1">5.4.99.27</ecNumber>
    </recommendedName>
    <alternativeName>
        <fullName evidence="1">tRNA pseudouridine(13) synthase</fullName>
    </alternativeName>
    <alternativeName>
        <fullName evidence="1">tRNA pseudouridylate synthase D</fullName>
    </alternativeName>
    <alternativeName>
        <fullName evidence="1">tRNA-uridine isomerase D</fullName>
    </alternativeName>
</protein>
<comment type="function">
    <text evidence="1">Responsible for synthesis of pseudouridine from uracil-13 in transfer RNAs.</text>
</comment>
<comment type="catalytic activity">
    <reaction evidence="1">
        <text>uridine(13) in tRNA = pseudouridine(13) in tRNA</text>
        <dbReference type="Rhea" id="RHEA:42540"/>
        <dbReference type="Rhea" id="RHEA-COMP:10105"/>
        <dbReference type="Rhea" id="RHEA-COMP:10106"/>
        <dbReference type="ChEBI" id="CHEBI:65314"/>
        <dbReference type="ChEBI" id="CHEBI:65315"/>
        <dbReference type="EC" id="5.4.99.27"/>
    </reaction>
</comment>
<comment type="similarity">
    <text evidence="1">Belongs to the pseudouridine synthase TruD family.</text>
</comment>
<proteinExistence type="inferred from homology"/>
<accession>A4WDV0</accession>
<keyword id="KW-0413">Isomerase</keyword>
<keyword id="KW-0819">tRNA processing</keyword>
<feature type="chain" id="PRO_1000084740" description="tRNA pseudouridine synthase D">
    <location>
        <begin position="1"/>
        <end position="349"/>
    </location>
</feature>
<feature type="domain" description="TRUD" evidence="1">
    <location>
        <begin position="155"/>
        <end position="303"/>
    </location>
</feature>
<feature type="active site" description="Nucleophile" evidence="1">
    <location>
        <position position="80"/>
    </location>
</feature>
<feature type="binding site" evidence="1">
    <location>
        <position position="27"/>
    </location>
    <ligand>
        <name>substrate</name>
    </ligand>
</feature>
<feature type="binding site" evidence="1">
    <location>
        <position position="129"/>
    </location>
    <ligand>
        <name>substrate</name>
    </ligand>
</feature>
<feature type="binding site" evidence="1">
    <location>
        <position position="329"/>
    </location>
    <ligand>
        <name>substrate</name>
    </ligand>
</feature>